<protein>
    <recommendedName>
        <fullName>Zinc transporter ZIP11</fullName>
    </recommendedName>
    <alternativeName>
        <fullName>Solute carrier family 39 member 11</fullName>
    </alternativeName>
    <alternativeName>
        <fullName>Zrt- and Irt-like protein 11</fullName>
        <shortName>ZIP-11</shortName>
    </alternativeName>
</protein>
<name>S39AB_XENTR</name>
<keyword id="KW-1003">Cell membrane</keyword>
<keyword id="KW-0963">Cytoplasm</keyword>
<keyword id="KW-0333">Golgi apparatus</keyword>
<keyword id="KW-0406">Ion transport</keyword>
<keyword id="KW-0472">Membrane</keyword>
<keyword id="KW-0539">Nucleus</keyword>
<keyword id="KW-1185">Reference proteome</keyword>
<keyword id="KW-0812">Transmembrane</keyword>
<keyword id="KW-1133">Transmembrane helix</keyword>
<keyword id="KW-0813">Transport</keyword>
<keyword id="KW-0862">Zinc</keyword>
<keyword id="KW-0864">Zinc transport</keyword>
<reference key="1">
    <citation type="submission" date="2006-10" db="EMBL/GenBank/DDBJ databases">
        <authorList>
            <consortium name="Sanger Xenopus tropicalis EST/cDNA project"/>
        </authorList>
    </citation>
    <scope>NUCLEOTIDE SEQUENCE [LARGE SCALE MRNA]</scope>
    <source>
        <tissue>Neurula</tissue>
    </source>
</reference>
<proteinExistence type="evidence at transcript level"/>
<dbReference type="EMBL" id="CR760068">
    <property type="protein sequence ID" value="CAJ83369.1"/>
    <property type="molecule type" value="mRNA"/>
</dbReference>
<dbReference type="RefSeq" id="NP_001016721.1">
    <property type="nucleotide sequence ID" value="NM_001016721.2"/>
</dbReference>
<dbReference type="RefSeq" id="XP_031749955.1">
    <property type="nucleotide sequence ID" value="XM_031894095.1"/>
</dbReference>
<dbReference type="SMR" id="Q28J44"/>
<dbReference type="FunCoup" id="Q28J44">
    <property type="interactions" value="1406"/>
</dbReference>
<dbReference type="STRING" id="8364.ENSXETP00000025756"/>
<dbReference type="PaxDb" id="8364-ENSXETP00000021967"/>
<dbReference type="GeneID" id="549475"/>
<dbReference type="KEGG" id="xtr:549475"/>
<dbReference type="AGR" id="Xenbase:XB-GENE-1003667"/>
<dbReference type="CTD" id="201266"/>
<dbReference type="Xenbase" id="XB-GENE-1003667">
    <property type="gene designation" value="slc39a11"/>
</dbReference>
<dbReference type="eggNOG" id="KOG2474">
    <property type="taxonomic scope" value="Eukaryota"/>
</dbReference>
<dbReference type="InParanoid" id="Q28J44"/>
<dbReference type="OMA" id="MIFVVIE"/>
<dbReference type="OrthoDB" id="262547at2759"/>
<dbReference type="Proteomes" id="UP000008143">
    <property type="component" value="Chromosome 10"/>
</dbReference>
<dbReference type="Bgee" id="ENSXETG00000009976">
    <property type="expression patterns" value="Expressed in 4-cell stage embryo and 12 other cell types or tissues"/>
</dbReference>
<dbReference type="GO" id="GO:0005737">
    <property type="term" value="C:cytoplasm"/>
    <property type="evidence" value="ECO:0000250"/>
    <property type="project" value="UniProtKB"/>
</dbReference>
<dbReference type="GO" id="GO:0005794">
    <property type="term" value="C:Golgi apparatus"/>
    <property type="evidence" value="ECO:0000250"/>
    <property type="project" value="UniProtKB"/>
</dbReference>
<dbReference type="GO" id="GO:0005634">
    <property type="term" value="C:nucleus"/>
    <property type="evidence" value="ECO:0000250"/>
    <property type="project" value="UniProtKB"/>
</dbReference>
<dbReference type="GO" id="GO:0005886">
    <property type="term" value="C:plasma membrane"/>
    <property type="evidence" value="ECO:0000250"/>
    <property type="project" value="UniProtKB"/>
</dbReference>
<dbReference type="GO" id="GO:0005385">
    <property type="term" value="F:zinc ion transmembrane transporter activity"/>
    <property type="evidence" value="ECO:0000250"/>
    <property type="project" value="UniProtKB"/>
</dbReference>
<dbReference type="InterPro" id="IPR003689">
    <property type="entry name" value="ZIP"/>
</dbReference>
<dbReference type="PANTHER" id="PTHR11040:SF211">
    <property type="entry name" value="ZINC TRANSPORTER ZIP11"/>
    <property type="match status" value="1"/>
</dbReference>
<dbReference type="PANTHER" id="PTHR11040">
    <property type="entry name" value="ZINC/IRON TRANSPORTER"/>
    <property type="match status" value="1"/>
</dbReference>
<dbReference type="Pfam" id="PF02535">
    <property type="entry name" value="Zip"/>
    <property type="match status" value="1"/>
</dbReference>
<comment type="function">
    <text evidence="1">Functions as a cellular zinc transporter.</text>
</comment>
<comment type="subcellular location">
    <subcellularLocation>
        <location evidence="1">Cell membrane</location>
        <topology evidence="3">Multi-pass membrane protein</topology>
    </subcellularLocation>
    <subcellularLocation>
        <location evidence="1">Nucleus</location>
    </subcellularLocation>
    <subcellularLocation>
        <location evidence="1">Cytoplasm</location>
    </subcellularLocation>
    <subcellularLocation>
        <location evidence="1">Golgi apparatus</location>
    </subcellularLocation>
</comment>
<comment type="similarity">
    <text evidence="3">Belongs to the ZIP transporter (TC 2.A.5) family.</text>
</comment>
<evidence type="ECO:0000250" key="1">
    <source>
        <dbReference type="UniProtKB" id="Q8BWY7"/>
    </source>
</evidence>
<evidence type="ECO:0000255" key="2"/>
<evidence type="ECO:0000305" key="3"/>
<accession>Q28J44</accession>
<gene>
    <name type="primary">slc39a11</name>
    <name type="synonym">zip11</name>
    <name type="ORF">TNeu027c15.1</name>
</gene>
<organism>
    <name type="scientific">Xenopus tropicalis</name>
    <name type="common">Western clawed frog</name>
    <name type="synonym">Silurana tropicalis</name>
    <dbReference type="NCBI Taxonomy" id="8364"/>
    <lineage>
        <taxon>Eukaryota</taxon>
        <taxon>Metazoa</taxon>
        <taxon>Chordata</taxon>
        <taxon>Craniata</taxon>
        <taxon>Vertebrata</taxon>
        <taxon>Euteleostomi</taxon>
        <taxon>Amphibia</taxon>
        <taxon>Batrachia</taxon>
        <taxon>Anura</taxon>
        <taxon>Pipoidea</taxon>
        <taxon>Pipidae</taxon>
        <taxon>Xenopodinae</taxon>
        <taxon>Xenopus</taxon>
        <taxon>Silurana</taxon>
    </lineage>
</organism>
<sequence length="336" mass="35522">MIDGYSPVLQSLLGTLLTWGLTAAGSALVFIFSSGQRQILDGSLGFAAGVMLAASYWSLLAPAIEMAENSNQYGSFAFVPAAVGFLVGAGFVYLADQLMPALGFSEDPYSIATLNQDSKPIKEKDEGDLYEDKELSIRIGRGGFHQDKIENGDVYQRKRGTVSPLAEDFSMLNPREAAHKGGSSWRRIMLLILAITIHNIPEGLAVGVGFGAIGKTPSATFENARNLALGIGIQNFPEGLAVSLPLRGAGVSTWKAFWYGQLSGMVEPIAGLLGTIAISLAEPLLPYALAFAAGAMVYVVTDDIIPEAQACGNGKLASWTCIFGFIVMMSLDVGLG</sequence>
<feature type="chain" id="PRO_0000308413" description="Zinc transporter ZIP11">
    <location>
        <begin position="1"/>
        <end position="336"/>
    </location>
</feature>
<feature type="transmembrane region" description="Helical" evidence="2">
    <location>
        <begin position="12"/>
        <end position="32"/>
    </location>
</feature>
<feature type="transmembrane region" description="Helical" evidence="2">
    <location>
        <begin position="44"/>
        <end position="64"/>
    </location>
</feature>
<feature type="transmembrane region" description="Helical" evidence="2">
    <location>
        <begin position="75"/>
        <end position="95"/>
    </location>
</feature>
<feature type="transmembrane region" description="Helical" evidence="2">
    <location>
        <begin position="188"/>
        <end position="208"/>
    </location>
</feature>
<feature type="transmembrane region" description="Helical" evidence="2">
    <location>
        <begin position="258"/>
        <end position="278"/>
    </location>
</feature>
<feature type="transmembrane region" description="Helical" evidence="2">
    <location>
        <begin position="280"/>
        <end position="300"/>
    </location>
</feature>
<feature type="transmembrane region" description="Helical" evidence="2">
    <location>
        <begin position="316"/>
        <end position="336"/>
    </location>
</feature>